<evidence type="ECO:0000250" key="1"/>
<evidence type="ECO:0000256" key="2">
    <source>
        <dbReference type="SAM" id="MobiDB-lite"/>
    </source>
</evidence>
<evidence type="ECO:0000305" key="3"/>
<evidence type="ECO:0007744" key="4">
    <source>
    </source>
</evidence>
<dbReference type="EMBL" id="AK052596">
    <property type="protein sequence ID" value="BAC35053.1"/>
    <property type="molecule type" value="mRNA"/>
</dbReference>
<dbReference type="EMBL" id="AK146011">
    <property type="protein sequence ID" value="BAE26831.1"/>
    <property type="molecule type" value="mRNA"/>
</dbReference>
<dbReference type="EMBL" id="AK159054">
    <property type="protein sequence ID" value="BAE34787.1"/>
    <property type="molecule type" value="mRNA"/>
</dbReference>
<dbReference type="EMBL" id="AL732614">
    <property type="status" value="NOT_ANNOTATED_CDS"/>
    <property type="molecule type" value="Genomic_DNA"/>
</dbReference>
<dbReference type="EMBL" id="BC055683">
    <property type="protein sequence ID" value="AAH55683.1"/>
    <property type="molecule type" value="mRNA"/>
</dbReference>
<dbReference type="CCDS" id="CCDS17948.1"/>
<dbReference type="RefSeq" id="NP_001342645.1">
    <property type="nucleotide sequence ID" value="NM_001355716.1"/>
</dbReference>
<dbReference type="RefSeq" id="NP_775602.1">
    <property type="nucleotide sequence ID" value="NM_173426.3"/>
</dbReference>
<dbReference type="RefSeq" id="XP_006537958.1">
    <property type="nucleotide sequence ID" value="XM_006537895.3"/>
</dbReference>
<dbReference type="RefSeq" id="XP_006537959.1">
    <property type="nucleotide sequence ID" value="XM_006537896.4"/>
</dbReference>
<dbReference type="RefSeq" id="XP_006537960.1">
    <property type="nucleotide sequence ID" value="XM_006537897.1"/>
</dbReference>
<dbReference type="RefSeq" id="XP_006537961.1">
    <property type="nucleotide sequence ID" value="XM_006537898.5"/>
</dbReference>
<dbReference type="RefSeq" id="XP_030109378.1">
    <property type="nucleotide sequence ID" value="XM_030253518.2"/>
</dbReference>
<dbReference type="RefSeq" id="XP_030109379.1">
    <property type="nucleotide sequence ID" value="XM_030253519.1"/>
</dbReference>
<dbReference type="RefSeq" id="XP_030109380.1">
    <property type="nucleotide sequence ID" value="XM_030253520.1"/>
</dbReference>
<dbReference type="RefSeq" id="XP_030109382.1">
    <property type="nucleotide sequence ID" value="XM_030253522.2"/>
</dbReference>
<dbReference type="RefSeq" id="XP_030109383.1">
    <property type="nucleotide sequence ID" value="XM_030253523.1"/>
</dbReference>
<dbReference type="SMR" id="Q8C739"/>
<dbReference type="BioGRID" id="232392">
    <property type="interactions" value="4"/>
</dbReference>
<dbReference type="FunCoup" id="Q8C739">
    <property type="interactions" value="2018"/>
</dbReference>
<dbReference type="STRING" id="10090.ENSMUSP00000062734"/>
<dbReference type="GlyGen" id="Q8C739">
    <property type="glycosylation" value="1 site"/>
</dbReference>
<dbReference type="iPTMnet" id="Q8C739"/>
<dbReference type="PhosphoSitePlus" id="Q8C739"/>
<dbReference type="jPOST" id="Q8C739"/>
<dbReference type="PaxDb" id="10090-ENSMUSP00000062734"/>
<dbReference type="PeptideAtlas" id="Q8C739"/>
<dbReference type="ProteomicsDB" id="275493"/>
<dbReference type="Antibodypedia" id="2031">
    <property type="antibodies" value="88 antibodies from 13 providers"/>
</dbReference>
<dbReference type="DNASU" id="242297"/>
<dbReference type="Ensembl" id="ENSMUST00000054857.13">
    <property type="protein sequence ID" value="ENSMUSP00000062734.7"/>
    <property type="gene ID" value="ENSMUSG00000049119.15"/>
</dbReference>
<dbReference type="Ensembl" id="ENSMUST00000108380.2">
    <property type="protein sequence ID" value="ENSMUSP00000104017.2"/>
    <property type="gene ID" value="ENSMUSG00000049119.15"/>
</dbReference>
<dbReference type="Ensembl" id="ENSMUST00000171403.2">
    <property type="protein sequence ID" value="ENSMUSP00000127942.2"/>
    <property type="gene ID" value="ENSMUSG00000049119.15"/>
</dbReference>
<dbReference type="GeneID" id="242297"/>
<dbReference type="KEGG" id="mmu:242297"/>
<dbReference type="UCSC" id="uc008rxe.1">
    <property type="organism name" value="mouse"/>
</dbReference>
<dbReference type="AGR" id="MGI:1916593"/>
<dbReference type="CTD" id="90362"/>
<dbReference type="MGI" id="MGI:1916593">
    <property type="gene designation" value="Fam110b"/>
</dbReference>
<dbReference type="VEuPathDB" id="HostDB:ENSMUSG00000049119"/>
<dbReference type="eggNOG" id="ENOG502R37V">
    <property type="taxonomic scope" value="Eukaryota"/>
</dbReference>
<dbReference type="GeneTree" id="ENSGT00950000183056"/>
<dbReference type="HOGENOM" id="CLU_050540_0_0_1"/>
<dbReference type="InParanoid" id="Q8C739"/>
<dbReference type="OMA" id="IASMKSP"/>
<dbReference type="OrthoDB" id="10028183at2759"/>
<dbReference type="PhylomeDB" id="Q8C739"/>
<dbReference type="TreeFam" id="TF330964"/>
<dbReference type="BioGRID-ORCS" id="242297">
    <property type="hits" value="1 hit in 76 CRISPR screens"/>
</dbReference>
<dbReference type="ChiTaRS" id="Fam110b">
    <property type="organism name" value="mouse"/>
</dbReference>
<dbReference type="PRO" id="PR:Q8C739"/>
<dbReference type="Proteomes" id="UP000000589">
    <property type="component" value="Chromosome 4"/>
</dbReference>
<dbReference type="RNAct" id="Q8C739">
    <property type="molecule type" value="protein"/>
</dbReference>
<dbReference type="Bgee" id="ENSMUSG00000049119">
    <property type="expression patterns" value="Expressed in caudate-putamen and 211 other cell types or tissues"/>
</dbReference>
<dbReference type="ExpressionAtlas" id="Q8C739">
    <property type="expression patterns" value="baseline and differential"/>
</dbReference>
<dbReference type="GO" id="GO:0005813">
    <property type="term" value="C:centrosome"/>
    <property type="evidence" value="ECO:0007669"/>
    <property type="project" value="UniProtKB-SubCell"/>
</dbReference>
<dbReference type="GO" id="GO:0005829">
    <property type="term" value="C:cytosol"/>
    <property type="evidence" value="ECO:0007669"/>
    <property type="project" value="Ensembl"/>
</dbReference>
<dbReference type="GO" id="GO:0005739">
    <property type="term" value="C:mitochondrion"/>
    <property type="evidence" value="ECO:0007669"/>
    <property type="project" value="Ensembl"/>
</dbReference>
<dbReference type="InterPro" id="IPR025740">
    <property type="entry name" value="FAM110"/>
</dbReference>
<dbReference type="InterPro" id="IPR025741">
    <property type="entry name" value="FAM110_C"/>
</dbReference>
<dbReference type="InterPro" id="IPR025739">
    <property type="entry name" value="FAM110_N"/>
</dbReference>
<dbReference type="PANTHER" id="PTHR14758">
    <property type="entry name" value="AGAP005440-PA"/>
    <property type="match status" value="1"/>
</dbReference>
<dbReference type="PANTHER" id="PTHR14758:SF2">
    <property type="entry name" value="PROTEIN FAM110B"/>
    <property type="match status" value="1"/>
</dbReference>
<dbReference type="Pfam" id="PF14160">
    <property type="entry name" value="FAM110_C"/>
    <property type="match status" value="1"/>
</dbReference>
<dbReference type="Pfam" id="PF14161">
    <property type="entry name" value="FAM110_N"/>
    <property type="match status" value="1"/>
</dbReference>
<name>F110B_MOUSE</name>
<organism>
    <name type="scientific">Mus musculus</name>
    <name type="common">Mouse</name>
    <dbReference type="NCBI Taxonomy" id="10090"/>
    <lineage>
        <taxon>Eukaryota</taxon>
        <taxon>Metazoa</taxon>
        <taxon>Chordata</taxon>
        <taxon>Craniata</taxon>
        <taxon>Vertebrata</taxon>
        <taxon>Euteleostomi</taxon>
        <taxon>Mammalia</taxon>
        <taxon>Eutheria</taxon>
        <taxon>Euarchontoglires</taxon>
        <taxon>Glires</taxon>
        <taxon>Rodentia</taxon>
        <taxon>Myomorpha</taxon>
        <taxon>Muroidea</taxon>
        <taxon>Muridae</taxon>
        <taxon>Murinae</taxon>
        <taxon>Mus</taxon>
        <taxon>Mus</taxon>
    </lineage>
</organism>
<keyword id="KW-0963">Cytoplasm</keyword>
<keyword id="KW-0206">Cytoskeleton</keyword>
<keyword id="KW-0597">Phosphoprotein</keyword>
<keyword id="KW-1185">Reference proteome</keyword>
<gene>
    <name type="primary">Fam110b</name>
</gene>
<proteinExistence type="evidence at protein level"/>
<feature type="chain" id="PRO_0000285652" description="Protein FAM110B">
    <location>
        <begin position="1"/>
        <end position="366"/>
    </location>
</feature>
<feature type="region of interest" description="Disordered" evidence="2">
    <location>
        <begin position="127"/>
        <end position="152"/>
    </location>
</feature>
<feature type="region of interest" description="Disordered" evidence="2">
    <location>
        <begin position="163"/>
        <end position="182"/>
    </location>
</feature>
<feature type="region of interest" description="Disordered" evidence="2">
    <location>
        <begin position="216"/>
        <end position="252"/>
    </location>
</feature>
<feature type="region of interest" description="Disordered" evidence="2">
    <location>
        <begin position="313"/>
        <end position="333"/>
    </location>
</feature>
<feature type="compositionally biased region" description="Basic and acidic residues" evidence="2">
    <location>
        <begin position="322"/>
        <end position="331"/>
    </location>
</feature>
<feature type="modified residue" description="Phosphoserine" evidence="4">
    <location>
        <position position="234"/>
    </location>
</feature>
<feature type="modified residue" description="Phosphoserine" evidence="4">
    <location>
        <position position="297"/>
    </location>
</feature>
<feature type="sequence conflict" description="In Ref. 1; BAE26831." evidence="3" ref="1">
    <original>E</original>
    <variation>D</variation>
    <location>
        <position position="271"/>
    </location>
</feature>
<sequence length="366" mass="40360">MPTETLQTGSMVKPVSPAGTFTSAVPLRILNKGPDYFRRQAEPNPKRLSAVERLEADKAKYVKSQEVINAKQEPVKPAVLAKPPVCPGTKRALGSPTLKVFGNHAKTESGVQRETLKLEILKNIINSSEGSSSGSGHKHSSRNWPPHRDTTDLHRHSFAESLKVYPTPGHGSPQESSSHVSRRLLEQSAETFLHVSHSSSDIRKVTSVKPLKAIPCSSSAPPLPPKPKVAAMKSPEADQVEPACGVSRRPSLQRSKSDLSDRYFRVDADVERFFNYCGLDPEELENLGMENFARANSDIISLNFRSASMISSDCEQSQDSNSDLRNDDSANDRVPYGISAIERNARIIKWLYSIKQARESQKVSHV</sequence>
<protein>
    <recommendedName>
        <fullName>Protein FAM110B</fullName>
    </recommendedName>
</protein>
<accession>Q8C739</accession>
<accession>Q3UKH0</accession>
<reference key="1">
    <citation type="journal article" date="2005" name="Science">
        <title>The transcriptional landscape of the mammalian genome.</title>
        <authorList>
            <person name="Carninci P."/>
            <person name="Kasukawa T."/>
            <person name="Katayama S."/>
            <person name="Gough J."/>
            <person name="Frith M.C."/>
            <person name="Maeda N."/>
            <person name="Oyama R."/>
            <person name="Ravasi T."/>
            <person name="Lenhard B."/>
            <person name="Wells C."/>
            <person name="Kodzius R."/>
            <person name="Shimokawa K."/>
            <person name="Bajic V.B."/>
            <person name="Brenner S.E."/>
            <person name="Batalov S."/>
            <person name="Forrest A.R."/>
            <person name="Zavolan M."/>
            <person name="Davis M.J."/>
            <person name="Wilming L.G."/>
            <person name="Aidinis V."/>
            <person name="Allen J.E."/>
            <person name="Ambesi-Impiombato A."/>
            <person name="Apweiler R."/>
            <person name="Aturaliya R.N."/>
            <person name="Bailey T.L."/>
            <person name="Bansal M."/>
            <person name="Baxter L."/>
            <person name="Beisel K.W."/>
            <person name="Bersano T."/>
            <person name="Bono H."/>
            <person name="Chalk A.M."/>
            <person name="Chiu K.P."/>
            <person name="Choudhary V."/>
            <person name="Christoffels A."/>
            <person name="Clutterbuck D.R."/>
            <person name="Crowe M.L."/>
            <person name="Dalla E."/>
            <person name="Dalrymple B.P."/>
            <person name="de Bono B."/>
            <person name="Della Gatta G."/>
            <person name="di Bernardo D."/>
            <person name="Down T."/>
            <person name="Engstrom P."/>
            <person name="Fagiolini M."/>
            <person name="Faulkner G."/>
            <person name="Fletcher C.F."/>
            <person name="Fukushima T."/>
            <person name="Furuno M."/>
            <person name="Futaki S."/>
            <person name="Gariboldi M."/>
            <person name="Georgii-Hemming P."/>
            <person name="Gingeras T.R."/>
            <person name="Gojobori T."/>
            <person name="Green R.E."/>
            <person name="Gustincich S."/>
            <person name="Harbers M."/>
            <person name="Hayashi Y."/>
            <person name="Hensch T.K."/>
            <person name="Hirokawa N."/>
            <person name="Hill D."/>
            <person name="Huminiecki L."/>
            <person name="Iacono M."/>
            <person name="Ikeo K."/>
            <person name="Iwama A."/>
            <person name="Ishikawa T."/>
            <person name="Jakt M."/>
            <person name="Kanapin A."/>
            <person name="Katoh M."/>
            <person name="Kawasawa Y."/>
            <person name="Kelso J."/>
            <person name="Kitamura H."/>
            <person name="Kitano H."/>
            <person name="Kollias G."/>
            <person name="Krishnan S.P."/>
            <person name="Kruger A."/>
            <person name="Kummerfeld S.K."/>
            <person name="Kurochkin I.V."/>
            <person name="Lareau L.F."/>
            <person name="Lazarevic D."/>
            <person name="Lipovich L."/>
            <person name="Liu J."/>
            <person name="Liuni S."/>
            <person name="McWilliam S."/>
            <person name="Madan Babu M."/>
            <person name="Madera M."/>
            <person name="Marchionni L."/>
            <person name="Matsuda H."/>
            <person name="Matsuzawa S."/>
            <person name="Miki H."/>
            <person name="Mignone F."/>
            <person name="Miyake S."/>
            <person name="Morris K."/>
            <person name="Mottagui-Tabar S."/>
            <person name="Mulder N."/>
            <person name="Nakano N."/>
            <person name="Nakauchi H."/>
            <person name="Ng P."/>
            <person name="Nilsson R."/>
            <person name="Nishiguchi S."/>
            <person name="Nishikawa S."/>
            <person name="Nori F."/>
            <person name="Ohara O."/>
            <person name="Okazaki Y."/>
            <person name="Orlando V."/>
            <person name="Pang K.C."/>
            <person name="Pavan W.J."/>
            <person name="Pavesi G."/>
            <person name="Pesole G."/>
            <person name="Petrovsky N."/>
            <person name="Piazza S."/>
            <person name="Reed J."/>
            <person name="Reid J.F."/>
            <person name="Ring B.Z."/>
            <person name="Ringwald M."/>
            <person name="Rost B."/>
            <person name="Ruan Y."/>
            <person name="Salzberg S.L."/>
            <person name="Sandelin A."/>
            <person name="Schneider C."/>
            <person name="Schoenbach C."/>
            <person name="Sekiguchi K."/>
            <person name="Semple C.A."/>
            <person name="Seno S."/>
            <person name="Sessa L."/>
            <person name="Sheng Y."/>
            <person name="Shibata Y."/>
            <person name="Shimada H."/>
            <person name="Shimada K."/>
            <person name="Silva D."/>
            <person name="Sinclair B."/>
            <person name="Sperling S."/>
            <person name="Stupka E."/>
            <person name="Sugiura K."/>
            <person name="Sultana R."/>
            <person name="Takenaka Y."/>
            <person name="Taki K."/>
            <person name="Tammoja K."/>
            <person name="Tan S.L."/>
            <person name="Tang S."/>
            <person name="Taylor M.S."/>
            <person name="Tegner J."/>
            <person name="Teichmann S.A."/>
            <person name="Ueda H.R."/>
            <person name="van Nimwegen E."/>
            <person name="Verardo R."/>
            <person name="Wei C.L."/>
            <person name="Yagi K."/>
            <person name="Yamanishi H."/>
            <person name="Zabarovsky E."/>
            <person name="Zhu S."/>
            <person name="Zimmer A."/>
            <person name="Hide W."/>
            <person name="Bult C."/>
            <person name="Grimmond S.M."/>
            <person name="Teasdale R.D."/>
            <person name="Liu E.T."/>
            <person name="Brusic V."/>
            <person name="Quackenbush J."/>
            <person name="Wahlestedt C."/>
            <person name="Mattick J.S."/>
            <person name="Hume D.A."/>
            <person name="Kai C."/>
            <person name="Sasaki D."/>
            <person name="Tomaru Y."/>
            <person name="Fukuda S."/>
            <person name="Kanamori-Katayama M."/>
            <person name="Suzuki M."/>
            <person name="Aoki J."/>
            <person name="Arakawa T."/>
            <person name="Iida J."/>
            <person name="Imamura K."/>
            <person name="Itoh M."/>
            <person name="Kato T."/>
            <person name="Kawaji H."/>
            <person name="Kawagashira N."/>
            <person name="Kawashima T."/>
            <person name="Kojima M."/>
            <person name="Kondo S."/>
            <person name="Konno H."/>
            <person name="Nakano K."/>
            <person name="Ninomiya N."/>
            <person name="Nishio T."/>
            <person name="Okada M."/>
            <person name="Plessy C."/>
            <person name="Shibata K."/>
            <person name="Shiraki T."/>
            <person name="Suzuki S."/>
            <person name="Tagami M."/>
            <person name="Waki K."/>
            <person name="Watahiki A."/>
            <person name="Okamura-Oho Y."/>
            <person name="Suzuki H."/>
            <person name="Kawai J."/>
            <person name="Hayashizaki Y."/>
        </authorList>
    </citation>
    <scope>NUCLEOTIDE SEQUENCE [LARGE SCALE MRNA]</scope>
    <source>
        <strain>C57BL/6J</strain>
        <tissue>Kidney</tissue>
        <tissue>Placenta</tissue>
        <tissue>Visual cortex</tissue>
    </source>
</reference>
<reference key="2">
    <citation type="journal article" date="2009" name="PLoS Biol.">
        <title>Lineage-specific biology revealed by a finished genome assembly of the mouse.</title>
        <authorList>
            <person name="Church D.M."/>
            <person name="Goodstadt L."/>
            <person name="Hillier L.W."/>
            <person name="Zody M.C."/>
            <person name="Goldstein S."/>
            <person name="She X."/>
            <person name="Bult C.J."/>
            <person name="Agarwala R."/>
            <person name="Cherry J.L."/>
            <person name="DiCuccio M."/>
            <person name="Hlavina W."/>
            <person name="Kapustin Y."/>
            <person name="Meric P."/>
            <person name="Maglott D."/>
            <person name="Birtle Z."/>
            <person name="Marques A.C."/>
            <person name="Graves T."/>
            <person name="Zhou S."/>
            <person name="Teague B."/>
            <person name="Potamousis K."/>
            <person name="Churas C."/>
            <person name="Place M."/>
            <person name="Herschleb J."/>
            <person name="Runnheim R."/>
            <person name="Forrest D."/>
            <person name="Amos-Landgraf J."/>
            <person name="Schwartz D.C."/>
            <person name="Cheng Z."/>
            <person name="Lindblad-Toh K."/>
            <person name="Eichler E.E."/>
            <person name="Ponting C.P."/>
        </authorList>
    </citation>
    <scope>NUCLEOTIDE SEQUENCE [LARGE SCALE GENOMIC DNA]</scope>
    <source>
        <strain>C57BL/6J</strain>
    </source>
</reference>
<reference key="3">
    <citation type="journal article" date="2004" name="Genome Res.">
        <title>The status, quality, and expansion of the NIH full-length cDNA project: the Mammalian Gene Collection (MGC).</title>
        <authorList>
            <consortium name="The MGC Project Team"/>
        </authorList>
    </citation>
    <scope>NUCLEOTIDE SEQUENCE [LARGE SCALE MRNA]</scope>
    <source>
        <strain>C57BL/6J</strain>
        <tissue>Brain</tissue>
    </source>
</reference>
<reference key="4">
    <citation type="journal article" date="2010" name="Cell">
        <title>A tissue-specific atlas of mouse protein phosphorylation and expression.</title>
        <authorList>
            <person name="Huttlin E.L."/>
            <person name="Jedrychowski M.P."/>
            <person name="Elias J.E."/>
            <person name="Goswami T."/>
            <person name="Rad R."/>
            <person name="Beausoleil S.A."/>
            <person name="Villen J."/>
            <person name="Haas W."/>
            <person name="Sowa M.E."/>
            <person name="Gygi S.P."/>
        </authorList>
    </citation>
    <scope>PHOSPHORYLATION [LARGE SCALE ANALYSIS] AT SER-234 AND SER-297</scope>
    <scope>IDENTIFICATION BY MASS SPECTROMETRY [LARGE SCALE ANALYSIS]</scope>
    <source>
        <tissue>Brain</tissue>
        <tissue>Kidney</tissue>
        <tissue>Lung</tissue>
        <tissue>Pancreas</tissue>
        <tissue>Testis</tissue>
    </source>
</reference>
<comment type="subcellular location">
    <subcellularLocation>
        <location>Cytoplasm</location>
    </subcellularLocation>
    <subcellularLocation>
        <location evidence="1">Cytoplasm</location>
        <location evidence="1">Cytoskeleton</location>
        <location evidence="1">Microtubule organizing center</location>
        <location evidence="1">Centrosome</location>
    </subcellularLocation>
</comment>
<comment type="similarity">
    <text evidence="3">Belongs to the FAM110 family.</text>
</comment>